<feature type="signal peptide" evidence="2">
    <location>
        <begin position="1"/>
        <end position="20"/>
    </location>
</feature>
<feature type="propeptide" id="PRO_0000365612" evidence="2">
    <location>
        <begin position="21"/>
        <end position="46"/>
    </location>
</feature>
<feature type="peptide" id="PRO_0000365613" description="Tyrosine-sulfated glycopeptide 2">
    <location>
        <begin position="47"/>
        <end position="64"/>
    </location>
</feature>
<feature type="propeptide" id="PRO_0000365614" evidence="2">
    <location>
        <begin position="65"/>
        <end position="71"/>
    </location>
</feature>
<feature type="region of interest" description="Disordered" evidence="3">
    <location>
        <begin position="50"/>
        <end position="71"/>
    </location>
</feature>
<feature type="compositionally biased region" description="Polar residues" evidence="3">
    <location>
        <begin position="61"/>
        <end position="71"/>
    </location>
</feature>
<feature type="modified residue" description="Sulfotyrosine" evidence="1">
    <location>
        <position position="48"/>
    </location>
</feature>
<feature type="modified residue" description="4-hydroxyproline" evidence="1">
    <location>
        <position position="62"/>
    </location>
</feature>
<feature type="glycosylation site" description="O-linked (Ara...) hydroxyproline" evidence="1">
    <location>
        <position position="62"/>
    </location>
</feature>
<comment type="function">
    <text evidence="1">Promotes cellular proliferation and expansion.</text>
</comment>
<comment type="subcellular location">
    <subcellularLocation>
        <location evidence="1">Secreted</location>
    </subcellularLocation>
</comment>
<comment type="PTM">
    <text evidence="1">The sulfation and the glycosylation are required for full activity.</text>
</comment>
<comment type="similarity">
    <text evidence="4">Belongs to the sulfated-peptide plant hormone family.</text>
</comment>
<evidence type="ECO:0000250" key="1"/>
<evidence type="ECO:0000255" key="2"/>
<evidence type="ECO:0000256" key="3">
    <source>
        <dbReference type="SAM" id="MobiDB-lite"/>
    </source>
</evidence>
<evidence type="ECO:0000305" key="4"/>
<sequence>MSFGTRLLLFLILTLPLVTSSSPNTLHVSGIVKTGTTSRFLMMTIEDYDDPSANTRHDPSVPTNAKADTTP</sequence>
<organism>
    <name type="scientific">Arabidopsis thaliana</name>
    <name type="common">Mouse-ear cress</name>
    <dbReference type="NCBI Taxonomy" id="3702"/>
    <lineage>
        <taxon>Eukaryota</taxon>
        <taxon>Viridiplantae</taxon>
        <taxon>Streptophyta</taxon>
        <taxon>Embryophyta</taxon>
        <taxon>Tracheophyta</taxon>
        <taxon>Spermatophyta</taxon>
        <taxon>Magnoliopsida</taxon>
        <taxon>eudicotyledons</taxon>
        <taxon>Gunneridae</taxon>
        <taxon>Pentapetalae</taxon>
        <taxon>rosids</taxon>
        <taxon>malvids</taxon>
        <taxon>Brassicales</taxon>
        <taxon>Brassicaceae</taxon>
        <taxon>Camelineae</taxon>
        <taxon>Arabidopsis</taxon>
    </lineage>
</organism>
<accession>Q8LE92</accession>
<keyword id="KW-0325">Glycoprotein</keyword>
<keyword id="KW-0339">Growth factor</keyword>
<keyword id="KW-0379">Hydroxylation</keyword>
<keyword id="KW-1185">Reference proteome</keyword>
<keyword id="KW-0964">Secreted</keyword>
<keyword id="KW-0732">Signal</keyword>
<keyword id="KW-0765">Sulfation</keyword>
<gene>
    <name type="primary">PSY2</name>
    <name type="ordered locus">At3g47295</name>
    <name type="ORF">T21L8.1</name>
</gene>
<protein>
    <recommendedName>
        <fullName>Protein PSY2</fullName>
    </recommendedName>
    <component>
        <recommendedName>
            <fullName>Tyrosine-sulfated glycopeptide 2</fullName>
        </recommendedName>
    </component>
</protein>
<reference key="1">
    <citation type="journal article" date="2000" name="Nature">
        <title>Sequence and analysis of chromosome 3 of the plant Arabidopsis thaliana.</title>
        <authorList>
            <person name="Salanoubat M."/>
            <person name="Lemcke K."/>
            <person name="Rieger M."/>
            <person name="Ansorge W."/>
            <person name="Unseld M."/>
            <person name="Fartmann B."/>
            <person name="Valle G."/>
            <person name="Bloecker H."/>
            <person name="Perez-Alonso M."/>
            <person name="Obermaier B."/>
            <person name="Delseny M."/>
            <person name="Boutry M."/>
            <person name="Grivell L.A."/>
            <person name="Mache R."/>
            <person name="Puigdomenech P."/>
            <person name="De Simone V."/>
            <person name="Choisne N."/>
            <person name="Artiguenave F."/>
            <person name="Robert C."/>
            <person name="Brottier P."/>
            <person name="Wincker P."/>
            <person name="Cattolico L."/>
            <person name="Weissenbach J."/>
            <person name="Saurin W."/>
            <person name="Quetier F."/>
            <person name="Schaefer M."/>
            <person name="Mueller-Auer S."/>
            <person name="Gabel C."/>
            <person name="Fuchs M."/>
            <person name="Benes V."/>
            <person name="Wurmbach E."/>
            <person name="Drzonek H."/>
            <person name="Erfle H."/>
            <person name="Jordan N."/>
            <person name="Bangert S."/>
            <person name="Wiedelmann R."/>
            <person name="Kranz H."/>
            <person name="Voss H."/>
            <person name="Holland R."/>
            <person name="Brandt P."/>
            <person name="Nyakatura G."/>
            <person name="Vezzi A."/>
            <person name="D'Angelo M."/>
            <person name="Pallavicini A."/>
            <person name="Toppo S."/>
            <person name="Simionati B."/>
            <person name="Conrad A."/>
            <person name="Hornischer K."/>
            <person name="Kauer G."/>
            <person name="Loehnert T.-H."/>
            <person name="Nordsiek G."/>
            <person name="Reichelt J."/>
            <person name="Scharfe M."/>
            <person name="Schoen O."/>
            <person name="Bargues M."/>
            <person name="Terol J."/>
            <person name="Climent J."/>
            <person name="Navarro P."/>
            <person name="Collado C."/>
            <person name="Perez-Perez A."/>
            <person name="Ottenwaelder B."/>
            <person name="Duchemin D."/>
            <person name="Cooke R."/>
            <person name="Laudie M."/>
            <person name="Berger-Llauro C."/>
            <person name="Purnelle B."/>
            <person name="Masuy D."/>
            <person name="de Haan M."/>
            <person name="Maarse A.C."/>
            <person name="Alcaraz J.-P."/>
            <person name="Cottet A."/>
            <person name="Casacuberta E."/>
            <person name="Monfort A."/>
            <person name="Argiriou A."/>
            <person name="Flores M."/>
            <person name="Liguori R."/>
            <person name="Vitale D."/>
            <person name="Mannhaupt G."/>
            <person name="Haase D."/>
            <person name="Schoof H."/>
            <person name="Rudd S."/>
            <person name="Zaccaria P."/>
            <person name="Mewes H.-W."/>
            <person name="Mayer K.F.X."/>
            <person name="Kaul S."/>
            <person name="Town C.D."/>
            <person name="Koo H.L."/>
            <person name="Tallon L.J."/>
            <person name="Jenkins J."/>
            <person name="Rooney T."/>
            <person name="Rizzo M."/>
            <person name="Walts A."/>
            <person name="Utterback T."/>
            <person name="Fujii C.Y."/>
            <person name="Shea T.P."/>
            <person name="Creasy T.H."/>
            <person name="Haas B."/>
            <person name="Maiti R."/>
            <person name="Wu D."/>
            <person name="Peterson J."/>
            <person name="Van Aken S."/>
            <person name="Pai G."/>
            <person name="Militscher J."/>
            <person name="Sellers P."/>
            <person name="Gill J.E."/>
            <person name="Feldblyum T.V."/>
            <person name="Preuss D."/>
            <person name="Lin X."/>
            <person name="Nierman W.C."/>
            <person name="Salzberg S.L."/>
            <person name="White O."/>
            <person name="Venter J.C."/>
            <person name="Fraser C.M."/>
            <person name="Kaneko T."/>
            <person name="Nakamura Y."/>
            <person name="Sato S."/>
            <person name="Kato T."/>
            <person name="Asamizu E."/>
            <person name="Sasamoto S."/>
            <person name="Kimura T."/>
            <person name="Idesawa K."/>
            <person name="Kawashima K."/>
            <person name="Kishida Y."/>
            <person name="Kiyokawa C."/>
            <person name="Kohara M."/>
            <person name="Matsumoto M."/>
            <person name="Matsuno A."/>
            <person name="Muraki A."/>
            <person name="Nakayama S."/>
            <person name="Nakazaki N."/>
            <person name="Shinpo S."/>
            <person name="Takeuchi C."/>
            <person name="Wada T."/>
            <person name="Watanabe A."/>
            <person name="Yamada M."/>
            <person name="Yasuda M."/>
            <person name="Tabata S."/>
        </authorList>
    </citation>
    <scope>NUCLEOTIDE SEQUENCE [LARGE SCALE GENOMIC DNA]</scope>
    <source>
        <strain>cv. Columbia</strain>
    </source>
</reference>
<reference key="2">
    <citation type="journal article" date="2017" name="Plant J.">
        <title>Araport11: a complete reannotation of the Arabidopsis thaliana reference genome.</title>
        <authorList>
            <person name="Cheng C.Y."/>
            <person name="Krishnakumar V."/>
            <person name="Chan A.P."/>
            <person name="Thibaud-Nissen F."/>
            <person name="Schobel S."/>
            <person name="Town C.D."/>
        </authorList>
    </citation>
    <scope>GENOME REANNOTATION</scope>
    <source>
        <strain>cv. Columbia</strain>
    </source>
</reference>
<reference key="3">
    <citation type="journal article" date="2002" name="Science">
        <title>Functional annotation of a full-length Arabidopsis cDNA collection.</title>
        <authorList>
            <person name="Seki M."/>
            <person name="Narusaka M."/>
            <person name="Kamiya A."/>
            <person name="Ishida J."/>
            <person name="Satou M."/>
            <person name="Sakurai T."/>
            <person name="Nakajima M."/>
            <person name="Enju A."/>
            <person name="Akiyama K."/>
            <person name="Oono Y."/>
            <person name="Muramatsu M."/>
            <person name="Hayashizaki Y."/>
            <person name="Kawai J."/>
            <person name="Carninci P."/>
            <person name="Itoh M."/>
            <person name="Ishii Y."/>
            <person name="Arakawa T."/>
            <person name="Shibata K."/>
            <person name="Shinagawa A."/>
            <person name="Shinozaki K."/>
        </authorList>
    </citation>
    <scope>NUCLEOTIDE SEQUENCE [LARGE SCALE MRNA]</scope>
    <source>
        <strain>cv. Columbia</strain>
    </source>
</reference>
<reference key="4">
    <citation type="journal article" date="2003" name="Science">
        <title>Empirical analysis of transcriptional activity in the Arabidopsis genome.</title>
        <authorList>
            <person name="Yamada K."/>
            <person name="Lim J."/>
            <person name="Dale J.M."/>
            <person name="Chen H."/>
            <person name="Shinn P."/>
            <person name="Palm C.J."/>
            <person name="Southwick A.M."/>
            <person name="Wu H.C."/>
            <person name="Kim C.J."/>
            <person name="Nguyen M."/>
            <person name="Pham P.K."/>
            <person name="Cheuk R.F."/>
            <person name="Karlin-Newmann G."/>
            <person name="Liu S.X."/>
            <person name="Lam B."/>
            <person name="Sakano H."/>
            <person name="Wu T."/>
            <person name="Yu G."/>
            <person name="Miranda M."/>
            <person name="Quach H.L."/>
            <person name="Tripp M."/>
            <person name="Chang C.H."/>
            <person name="Lee J.M."/>
            <person name="Toriumi M.J."/>
            <person name="Chan M.M."/>
            <person name="Tang C.C."/>
            <person name="Onodera C.S."/>
            <person name="Deng J.M."/>
            <person name="Akiyama K."/>
            <person name="Ansari Y."/>
            <person name="Arakawa T."/>
            <person name="Banh J."/>
            <person name="Banno F."/>
            <person name="Bowser L."/>
            <person name="Brooks S.Y."/>
            <person name="Carninci P."/>
            <person name="Chao Q."/>
            <person name="Choy N."/>
            <person name="Enju A."/>
            <person name="Goldsmith A.D."/>
            <person name="Gurjal M."/>
            <person name="Hansen N.F."/>
            <person name="Hayashizaki Y."/>
            <person name="Johnson-Hopson C."/>
            <person name="Hsuan V.W."/>
            <person name="Iida K."/>
            <person name="Karnes M."/>
            <person name="Khan S."/>
            <person name="Koesema E."/>
            <person name="Ishida J."/>
            <person name="Jiang P.X."/>
            <person name="Jones T."/>
            <person name="Kawai J."/>
            <person name="Kamiya A."/>
            <person name="Meyers C."/>
            <person name="Nakajima M."/>
            <person name="Narusaka M."/>
            <person name="Seki M."/>
            <person name="Sakurai T."/>
            <person name="Satou M."/>
            <person name="Tamse R."/>
            <person name="Vaysberg M."/>
            <person name="Wallender E.K."/>
            <person name="Wong C."/>
            <person name="Yamamura Y."/>
            <person name="Yuan S."/>
            <person name="Shinozaki K."/>
            <person name="Davis R.W."/>
            <person name="Theologis A."/>
            <person name="Ecker J.R."/>
        </authorList>
    </citation>
    <scope>NUCLEOTIDE SEQUENCE [LARGE SCALE MRNA]</scope>
    <source>
        <strain>cv. Columbia</strain>
    </source>
</reference>
<reference key="5">
    <citation type="submission" date="2002-03" db="EMBL/GenBank/DDBJ databases">
        <title>Full-length cDNA from Arabidopsis thaliana.</title>
        <authorList>
            <person name="Brover V.V."/>
            <person name="Troukhan M.E."/>
            <person name="Alexandrov N.A."/>
            <person name="Lu Y.-P."/>
            <person name="Flavell R.B."/>
            <person name="Feldmann K.A."/>
        </authorList>
    </citation>
    <scope>NUCLEOTIDE SEQUENCE [LARGE SCALE MRNA]</scope>
</reference>
<reference key="6">
    <citation type="journal article" date="2007" name="Proc. Natl. Acad. Sci. U.S.A.">
        <title>Tyrosine-sulfated glycopeptide involved in cellular proliferation and expansion in Arabidopsis.</title>
        <authorList>
            <person name="Amano Y."/>
            <person name="Tsubouchi H."/>
            <person name="Shinohara H."/>
            <person name="Ogawa M."/>
            <person name="Matsubayashi Y."/>
        </authorList>
    </citation>
    <scope>IDENTIFICATION</scope>
    <source>
        <strain>cv. Columbia</strain>
    </source>
</reference>
<proteinExistence type="inferred from homology"/>
<name>PSY2_ARATH</name>
<dbReference type="EMBL" id="AL096860">
    <property type="status" value="NOT_ANNOTATED_CDS"/>
    <property type="molecule type" value="Genomic_DNA"/>
</dbReference>
<dbReference type="EMBL" id="CP002686">
    <property type="protein sequence ID" value="AEE78262.1"/>
    <property type="molecule type" value="Genomic_DNA"/>
</dbReference>
<dbReference type="EMBL" id="AK117627">
    <property type="protein sequence ID" value="BAC42283.1"/>
    <property type="molecule type" value="mRNA"/>
</dbReference>
<dbReference type="EMBL" id="BT004922">
    <property type="protein sequence ID" value="AAO50455.1"/>
    <property type="molecule type" value="mRNA"/>
</dbReference>
<dbReference type="EMBL" id="AY085556">
    <property type="protein sequence ID" value="AAM67244.1"/>
    <property type="molecule type" value="mRNA"/>
</dbReference>
<dbReference type="RefSeq" id="NP_566890.1">
    <property type="nucleotide sequence ID" value="NM_114597.2"/>
</dbReference>
<dbReference type="STRING" id="3702.Q8LE92"/>
<dbReference type="GlyCosmos" id="Q8LE92">
    <property type="glycosylation" value="1 site, No reported glycans"/>
</dbReference>
<dbReference type="PaxDb" id="3702-AT3G47295.1"/>
<dbReference type="EnsemblPlants" id="AT3G47295.1">
    <property type="protein sequence ID" value="AT3G47295.1"/>
    <property type="gene ID" value="AT3G47295"/>
</dbReference>
<dbReference type="GeneID" id="823883"/>
<dbReference type="Gramene" id="AT3G47295.1">
    <property type="protein sequence ID" value="AT3G47295.1"/>
    <property type="gene ID" value="AT3G47295"/>
</dbReference>
<dbReference type="KEGG" id="ath:AT3G47295"/>
<dbReference type="Araport" id="AT3G47295"/>
<dbReference type="TAIR" id="AT3G47295"/>
<dbReference type="HOGENOM" id="CLU_197080_1_0_1"/>
<dbReference type="InParanoid" id="Q8LE92"/>
<dbReference type="OMA" id="MMTIEDY"/>
<dbReference type="OrthoDB" id="1877702at2759"/>
<dbReference type="PRO" id="PR:Q8LE92"/>
<dbReference type="Proteomes" id="UP000006548">
    <property type="component" value="Chromosome 3"/>
</dbReference>
<dbReference type="ExpressionAtlas" id="Q8LE92">
    <property type="expression patterns" value="baseline and differential"/>
</dbReference>
<dbReference type="GO" id="GO:0005576">
    <property type="term" value="C:extracellular region"/>
    <property type="evidence" value="ECO:0007669"/>
    <property type="project" value="UniProtKB-SubCell"/>
</dbReference>
<dbReference type="GO" id="GO:0008083">
    <property type="term" value="F:growth factor activity"/>
    <property type="evidence" value="ECO:0007669"/>
    <property type="project" value="UniProtKB-KW"/>
</dbReference>
<dbReference type="InterPro" id="IPR034430">
    <property type="entry name" value="PSY"/>
</dbReference>
<dbReference type="PANTHER" id="PTHR37177">
    <property type="entry name" value="PROTEIN PSY1"/>
    <property type="match status" value="1"/>
</dbReference>
<dbReference type="PANTHER" id="PTHR37177:SF2">
    <property type="entry name" value="PROTEIN PSY2"/>
    <property type="match status" value="1"/>
</dbReference>